<sequence>MKYNRHAKILDIIENNTIETQEELAEKLKQQGMDVTQATVSRDIKELRLIKVMTPEGYYKYSAFAQSEKQVSNRLITILTEAYVSSDYANNIVVVKTLSGMAQAAGSAIDSLKWNEILGTIAGDDTLIMVCRAEKIAEDIVNKFNKMIKS</sequence>
<gene>
    <name evidence="1" type="primary">argR</name>
    <name type="ordered locus">Ccel_1897</name>
</gene>
<organism>
    <name type="scientific">Ruminiclostridium cellulolyticum (strain ATCC 35319 / DSM 5812 / JCM 6584 / H10)</name>
    <name type="common">Clostridium cellulolyticum</name>
    <dbReference type="NCBI Taxonomy" id="394503"/>
    <lineage>
        <taxon>Bacteria</taxon>
        <taxon>Bacillati</taxon>
        <taxon>Bacillota</taxon>
        <taxon>Clostridia</taxon>
        <taxon>Eubacteriales</taxon>
        <taxon>Oscillospiraceae</taxon>
        <taxon>Ruminiclostridium</taxon>
    </lineage>
</organism>
<comment type="function">
    <text evidence="1">Regulates arginine biosynthesis genes.</text>
</comment>
<comment type="pathway">
    <text>Amino-acid biosynthesis; L-arginine biosynthesis [regulation].</text>
</comment>
<comment type="subcellular location">
    <subcellularLocation>
        <location evidence="1">Cytoplasm</location>
    </subcellularLocation>
</comment>
<comment type="similarity">
    <text evidence="1">Belongs to the ArgR family.</text>
</comment>
<keyword id="KW-0028">Amino-acid biosynthesis</keyword>
<keyword id="KW-0055">Arginine biosynthesis</keyword>
<keyword id="KW-0963">Cytoplasm</keyword>
<keyword id="KW-0238">DNA-binding</keyword>
<keyword id="KW-1185">Reference proteome</keyword>
<keyword id="KW-0678">Repressor</keyword>
<keyword id="KW-0804">Transcription</keyword>
<keyword id="KW-0805">Transcription regulation</keyword>
<accession>B8I3A2</accession>
<feature type="chain" id="PRO_1000123790" description="Arginine repressor">
    <location>
        <begin position="1"/>
        <end position="150"/>
    </location>
</feature>
<reference key="1">
    <citation type="submission" date="2009-01" db="EMBL/GenBank/DDBJ databases">
        <title>Complete sequence of Clostridium cellulolyticum H10.</title>
        <authorList>
            <consortium name="US DOE Joint Genome Institute"/>
            <person name="Lucas S."/>
            <person name="Copeland A."/>
            <person name="Lapidus A."/>
            <person name="Glavina del Rio T."/>
            <person name="Dalin E."/>
            <person name="Tice H."/>
            <person name="Bruce D."/>
            <person name="Goodwin L."/>
            <person name="Pitluck S."/>
            <person name="Chertkov O."/>
            <person name="Saunders E."/>
            <person name="Brettin T."/>
            <person name="Detter J.C."/>
            <person name="Han C."/>
            <person name="Larimer F."/>
            <person name="Land M."/>
            <person name="Hauser L."/>
            <person name="Kyrpides N."/>
            <person name="Ivanova N."/>
            <person name="Zhou J."/>
            <person name="Richardson P."/>
        </authorList>
    </citation>
    <scope>NUCLEOTIDE SEQUENCE [LARGE SCALE GENOMIC DNA]</scope>
    <source>
        <strain>ATCC 35319 / DSM 5812 / JCM 6584 / H10</strain>
    </source>
</reference>
<evidence type="ECO:0000255" key="1">
    <source>
        <dbReference type="HAMAP-Rule" id="MF_00173"/>
    </source>
</evidence>
<dbReference type="EMBL" id="CP001348">
    <property type="protein sequence ID" value="ACL76245.1"/>
    <property type="molecule type" value="Genomic_DNA"/>
</dbReference>
<dbReference type="RefSeq" id="WP_015925350.1">
    <property type="nucleotide sequence ID" value="NC_011898.1"/>
</dbReference>
<dbReference type="SMR" id="B8I3A2"/>
<dbReference type="STRING" id="394503.Ccel_1897"/>
<dbReference type="KEGG" id="cce:Ccel_1897"/>
<dbReference type="eggNOG" id="COG1438">
    <property type="taxonomic scope" value="Bacteria"/>
</dbReference>
<dbReference type="HOGENOM" id="CLU_097103_3_0_9"/>
<dbReference type="OrthoDB" id="9807089at2"/>
<dbReference type="UniPathway" id="UPA00068"/>
<dbReference type="Proteomes" id="UP000001349">
    <property type="component" value="Chromosome"/>
</dbReference>
<dbReference type="GO" id="GO:0005737">
    <property type="term" value="C:cytoplasm"/>
    <property type="evidence" value="ECO:0007669"/>
    <property type="project" value="UniProtKB-SubCell"/>
</dbReference>
<dbReference type="GO" id="GO:0034618">
    <property type="term" value="F:arginine binding"/>
    <property type="evidence" value="ECO:0007669"/>
    <property type="project" value="InterPro"/>
</dbReference>
<dbReference type="GO" id="GO:0003677">
    <property type="term" value="F:DNA binding"/>
    <property type="evidence" value="ECO:0007669"/>
    <property type="project" value="UniProtKB-KW"/>
</dbReference>
<dbReference type="GO" id="GO:0003700">
    <property type="term" value="F:DNA-binding transcription factor activity"/>
    <property type="evidence" value="ECO:0007669"/>
    <property type="project" value="UniProtKB-UniRule"/>
</dbReference>
<dbReference type="GO" id="GO:0006526">
    <property type="term" value="P:L-arginine biosynthetic process"/>
    <property type="evidence" value="ECO:0007669"/>
    <property type="project" value="UniProtKB-UniPathway"/>
</dbReference>
<dbReference type="GO" id="GO:0051259">
    <property type="term" value="P:protein complex oligomerization"/>
    <property type="evidence" value="ECO:0007669"/>
    <property type="project" value="InterPro"/>
</dbReference>
<dbReference type="GO" id="GO:1900079">
    <property type="term" value="P:regulation of arginine biosynthetic process"/>
    <property type="evidence" value="ECO:0007669"/>
    <property type="project" value="UniProtKB-UniRule"/>
</dbReference>
<dbReference type="Gene3D" id="3.30.1360.40">
    <property type="match status" value="1"/>
</dbReference>
<dbReference type="Gene3D" id="1.10.10.10">
    <property type="entry name" value="Winged helix-like DNA-binding domain superfamily/Winged helix DNA-binding domain"/>
    <property type="match status" value="1"/>
</dbReference>
<dbReference type="HAMAP" id="MF_00173">
    <property type="entry name" value="Arg_repressor"/>
    <property type="match status" value="1"/>
</dbReference>
<dbReference type="InterPro" id="IPR001669">
    <property type="entry name" value="Arg_repress"/>
</dbReference>
<dbReference type="InterPro" id="IPR020899">
    <property type="entry name" value="Arg_repress_C"/>
</dbReference>
<dbReference type="InterPro" id="IPR036251">
    <property type="entry name" value="Arg_repress_C_sf"/>
</dbReference>
<dbReference type="InterPro" id="IPR020900">
    <property type="entry name" value="Arg_repress_DNA-bd"/>
</dbReference>
<dbReference type="InterPro" id="IPR036388">
    <property type="entry name" value="WH-like_DNA-bd_sf"/>
</dbReference>
<dbReference type="InterPro" id="IPR036390">
    <property type="entry name" value="WH_DNA-bd_sf"/>
</dbReference>
<dbReference type="NCBIfam" id="TIGR01529">
    <property type="entry name" value="argR_whole"/>
    <property type="match status" value="1"/>
</dbReference>
<dbReference type="NCBIfam" id="NF001680">
    <property type="entry name" value="PRK00441.1"/>
    <property type="match status" value="1"/>
</dbReference>
<dbReference type="PANTHER" id="PTHR34471">
    <property type="entry name" value="ARGININE REPRESSOR"/>
    <property type="match status" value="1"/>
</dbReference>
<dbReference type="PANTHER" id="PTHR34471:SF1">
    <property type="entry name" value="ARGININE REPRESSOR"/>
    <property type="match status" value="1"/>
</dbReference>
<dbReference type="Pfam" id="PF01316">
    <property type="entry name" value="Arg_repressor"/>
    <property type="match status" value="1"/>
</dbReference>
<dbReference type="Pfam" id="PF02863">
    <property type="entry name" value="Arg_repressor_C"/>
    <property type="match status" value="1"/>
</dbReference>
<dbReference type="PRINTS" id="PR01467">
    <property type="entry name" value="ARGREPRESSOR"/>
</dbReference>
<dbReference type="SUPFAM" id="SSF55252">
    <property type="entry name" value="C-terminal domain of arginine repressor"/>
    <property type="match status" value="1"/>
</dbReference>
<dbReference type="SUPFAM" id="SSF46785">
    <property type="entry name" value="Winged helix' DNA-binding domain"/>
    <property type="match status" value="1"/>
</dbReference>
<proteinExistence type="inferred from homology"/>
<protein>
    <recommendedName>
        <fullName evidence="1">Arginine repressor</fullName>
    </recommendedName>
</protein>
<name>ARGR_RUMCH</name>